<feature type="chain" id="PRO_0000230171" description="Phosphoribosyl-ATP pyrophosphatase">
    <location>
        <begin position="1"/>
        <end position="122"/>
    </location>
</feature>
<comment type="catalytic activity">
    <reaction evidence="1">
        <text>1-(5-phospho-beta-D-ribosyl)-ATP + H2O = 1-(5-phospho-beta-D-ribosyl)-5'-AMP + diphosphate + H(+)</text>
        <dbReference type="Rhea" id="RHEA:22828"/>
        <dbReference type="ChEBI" id="CHEBI:15377"/>
        <dbReference type="ChEBI" id="CHEBI:15378"/>
        <dbReference type="ChEBI" id="CHEBI:33019"/>
        <dbReference type="ChEBI" id="CHEBI:59457"/>
        <dbReference type="ChEBI" id="CHEBI:73183"/>
        <dbReference type="EC" id="3.6.1.31"/>
    </reaction>
</comment>
<comment type="pathway">
    <text evidence="1">Amino-acid biosynthesis; L-histidine biosynthesis; L-histidine from 5-phospho-alpha-D-ribose 1-diphosphate: step 2/9.</text>
</comment>
<comment type="subcellular location">
    <subcellularLocation>
        <location evidence="1">Cytoplasm</location>
    </subcellularLocation>
</comment>
<comment type="similarity">
    <text evidence="1">Belongs to the PRA-PH family.</text>
</comment>
<dbReference type="EC" id="3.6.1.31" evidence="1"/>
<dbReference type="EMBL" id="BX571965">
    <property type="protein sequence ID" value="CAH37141.1"/>
    <property type="molecule type" value="Genomic_DNA"/>
</dbReference>
<dbReference type="RefSeq" id="WP_004202813.1">
    <property type="nucleotide sequence ID" value="NZ_CP009538.1"/>
</dbReference>
<dbReference type="RefSeq" id="YP_109724.1">
    <property type="nucleotide sequence ID" value="NC_006350.1"/>
</dbReference>
<dbReference type="SMR" id="Q63Q94"/>
<dbReference type="STRING" id="272560.BPSL3131"/>
<dbReference type="KEGG" id="bps:BPSL3131"/>
<dbReference type="PATRIC" id="fig|272560.51.peg.2112"/>
<dbReference type="eggNOG" id="COG0140">
    <property type="taxonomic scope" value="Bacteria"/>
</dbReference>
<dbReference type="UniPathway" id="UPA00031">
    <property type="reaction ID" value="UER00007"/>
</dbReference>
<dbReference type="Proteomes" id="UP000000605">
    <property type="component" value="Chromosome 1"/>
</dbReference>
<dbReference type="GO" id="GO:0005737">
    <property type="term" value="C:cytoplasm"/>
    <property type="evidence" value="ECO:0007669"/>
    <property type="project" value="UniProtKB-SubCell"/>
</dbReference>
<dbReference type="GO" id="GO:0005524">
    <property type="term" value="F:ATP binding"/>
    <property type="evidence" value="ECO:0007669"/>
    <property type="project" value="UniProtKB-KW"/>
</dbReference>
<dbReference type="GO" id="GO:0004636">
    <property type="term" value="F:phosphoribosyl-ATP diphosphatase activity"/>
    <property type="evidence" value="ECO:0007669"/>
    <property type="project" value="UniProtKB-UniRule"/>
</dbReference>
<dbReference type="GO" id="GO:0000105">
    <property type="term" value="P:L-histidine biosynthetic process"/>
    <property type="evidence" value="ECO:0007669"/>
    <property type="project" value="UniProtKB-UniRule"/>
</dbReference>
<dbReference type="CDD" id="cd11534">
    <property type="entry name" value="NTP-PPase_HisIE_like"/>
    <property type="match status" value="1"/>
</dbReference>
<dbReference type="Gene3D" id="1.10.287.1080">
    <property type="entry name" value="MazG-like"/>
    <property type="match status" value="1"/>
</dbReference>
<dbReference type="HAMAP" id="MF_01020">
    <property type="entry name" value="HisE"/>
    <property type="match status" value="1"/>
</dbReference>
<dbReference type="InterPro" id="IPR008179">
    <property type="entry name" value="HisE"/>
</dbReference>
<dbReference type="InterPro" id="IPR021130">
    <property type="entry name" value="PRib-ATP_PPHydrolase-like"/>
</dbReference>
<dbReference type="NCBIfam" id="TIGR03188">
    <property type="entry name" value="histidine_hisI"/>
    <property type="match status" value="1"/>
</dbReference>
<dbReference type="NCBIfam" id="NF001611">
    <property type="entry name" value="PRK00400.1-3"/>
    <property type="match status" value="1"/>
</dbReference>
<dbReference type="PANTHER" id="PTHR42945">
    <property type="entry name" value="HISTIDINE BIOSYNTHESIS BIFUNCTIONAL PROTEIN"/>
    <property type="match status" value="1"/>
</dbReference>
<dbReference type="PANTHER" id="PTHR42945:SF9">
    <property type="entry name" value="HISTIDINE BIOSYNTHESIS BIFUNCTIONAL PROTEIN HISIE"/>
    <property type="match status" value="1"/>
</dbReference>
<dbReference type="Pfam" id="PF01503">
    <property type="entry name" value="PRA-PH"/>
    <property type="match status" value="1"/>
</dbReference>
<dbReference type="SUPFAM" id="SSF101386">
    <property type="entry name" value="all-alpha NTP pyrophosphatases"/>
    <property type="match status" value="1"/>
</dbReference>
<organism>
    <name type="scientific">Burkholderia pseudomallei (strain K96243)</name>
    <dbReference type="NCBI Taxonomy" id="272560"/>
    <lineage>
        <taxon>Bacteria</taxon>
        <taxon>Pseudomonadati</taxon>
        <taxon>Pseudomonadota</taxon>
        <taxon>Betaproteobacteria</taxon>
        <taxon>Burkholderiales</taxon>
        <taxon>Burkholderiaceae</taxon>
        <taxon>Burkholderia</taxon>
        <taxon>pseudomallei group</taxon>
    </lineage>
</organism>
<proteinExistence type="inferred from homology"/>
<sequence>MTQSTTEDTLLRLAAVIDSRKGGDPEQSYVSRLFHKGDDAILKKIGEEATEVVLAAKDVRQGGAPSALVGEVADLWFHCLVALSHFDLSPADVIAELERREGMSGIEEKALRKRREREENGG</sequence>
<gene>
    <name evidence="1" type="primary">hisE</name>
    <name type="ordered locus">BPSL3131</name>
</gene>
<name>HIS2_BURPS</name>
<accession>Q63Q94</accession>
<reference key="1">
    <citation type="journal article" date="2004" name="Proc. Natl. Acad. Sci. U.S.A.">
        <title>Genomic plasticity of the causative agent of melioidosis, Burkholderia pseudomallei.</title>
        <authorList>
            <person name="Holden M.T.G."/>
            <person name="Titball R.W."/>
            <person name="Peacock S.J."/>
            <person name="Cerdeno-Tarraga A.-M."/>
            <person name="Atkins T."/>
            <person name="Crossman L.C."/>
            <person name="Pitt T."/>
            <person name="Churcher C."/>
            <person name="Mungall K.L."/>
            <person name="Bentley S.D."/>
            <person name="Sebaihia M."/>
            <person name="Thomson N.R."/>
            <person name="Bason N."/>
            <person name="Beacham I.R."/>
            <person name="Brooks K."/>
            <person name="Brown K.A."/>
            <person name="Brown N.F."/>
            <person name="Challis G.L."/>
            <person name="Cherevach I."/>
            <person name="Chillingworth T."/>
            <person name="Cronin A."/>
            <person name="Crossett B."/>
            <person name="Davis P."/>
            <person name="DeShazer D."/>
            <person name="Feltwell T."/>
            <person name="Fraser A."/>
            <person name="Hance Z."/>
            <person name="Hauser H."/>
            <person name="Holroyd S."/>
            <person name="Jagels K."/>
            <person name="Keith K.E."/>
            <person name="Maddison M."/>
            <person name="Moule S."/>
            <person name="Price C."/>
            <person name="Quail M.A."/>
            <person name="Rabbinowitsch E."/>
            <person name="Rutherford K."/>
            <person name="Sanders M."/>
            <person name="Simmonds M."/>
            <person name="Songsivilai S."/>
            <person name="Stevens K."/>
            <person name="Tumapa S."/>
            <person name="Vesaratchavest M."/>
            <person name="Whitehead S."/>
            <person name="Yeats C."/>
            <person name="Barrell B.G."/>
            <person name="Oyston P.C.F."/>
            <person name="Parkhill J."/>
        </authorList>
    </citation>
    <scope>NUCLEOTIDE SEQUENCE [LARGE SCALE GENOMIC DNA]</scope>
    <source>
        <strain>K96243</strain>
    </source>
</reference>
<evidence type="ECO:0000255" key="1">
    <source>
        <dbReference type="HAMAP-Rule" id="MF_01020"/>
    </source>
</evidence>
<protein>
    <recommendedName>
        <fullName evidence="1">Phosphoribosyl-ATP pyrophosphatase</fullName>
        <shortName evidence="1">PRA-PH</shortName>
        <ecNumber evidence="1">3.6.1.31</ecNumber>
    </recommendedName>
</protein>
<keyword id="KW-0028">Amino-acid biosynthesis</keyword>
<keyword id="KW-0067">ATP-binding</keyword>
<keyword id="KW-0963">Cytoplasm</keyword>
<keyword id="KW-0368">Histidine biosynthesis</keyword>
<keyword id="KW-0378">Hydrolase</keyword>
<keyword id="KW-0547">Nucleotide-binding</keyword>
<keyword id="KW-1185">Reference proteome</keyword>